<dbReference type="EC" id="2.7.11.12"/>
<dbReference type="EMBL" id="M27124">
    <property type="protein sequence ID" value="AAA28457.1"/>
    <property type="molecule type" value="Genomic_DNA"/>
</dbReference>
<dbReference type="EMBL" id="M27122">
    <property type="protein sequence ID" value="AAA28457.1"/>
    <property type="status" value="JOINED"/>
    <property type="molecule type" value="Genomic_DNA"/>
</dbReference>
<dbReference type="EMBL" id="M27123">
    <property type="protein sequence ID" value="AAA28457.1"/>
    <property type="status" value="JOINED"/>
    <property type="molecule type" value="Genomic_DNA"/>
</dbReference>
<dbReference type="EMBL" id="M30147">
    <property type="protein sequence ID" value="AAA28456.1"/>
    <property type="molecule type" value="mRNA"/>
</dbReference>
<dbReference type="EMBL" id="M30148">
    <property type="protein sequence ID" value="AAA28458.1"/>
    <property type="molecule type" value="mRNA"/>
</dbReference>
<dbReference type="EMBL" id="M30149">
    <property type="protein sequence ID" value="AAA28454.1"/>
    <property type="molecule type" value="mRNA"/>
</dbReference>
<dbReference type="EMBL" id="AE014134">
    <property type="protein sequence ID" value="AAG22252.2"/>
    <property type="molecule type" value="Genomic_DNA"/>
</dbReference>
<dbReference type="EMBL" id="AE014134">
    <property type="protein sequence ID" value="AAG22254.1"/>
    <property type="molecule type" value="Genomic_DNA"/>
</dbReference>
<dbReference type="EMBL" id="AE014134">
    <property type="protein sequence ID" value="AAS64616.1"/>
    <property type="molecule type" value="Genomic_DNA"/>
</dbReference>
<dbReference type="EMBL" id="AE014134">
    <property type="protein sequence ID" value="AAX52650.1"/>
    <property type="molecule type" value="Genomic_DNA"/>
</dbReference>
<dbReference type="EMBL" id="AF132175">
    <property type="protein sequence ID" value="AAD34763.2"/>
    <property type="molecule type" value="mRNA"/>
</dbReference>
<dbReference type="EMBL" id="BT004881">
    <property type="protein sequence ID" value="AAO45237.1"/>
    <property type="molecule type" value="mRNA"/>
</dbReference>
<dbReference type="PIR" id="C34106">
    <property type="entry name" value="C34106"/>
</dbReference>
<dbReference type="PIR" id="D34106">
    <property type="entry name" value="D34106"/>
</dbReference>
<dbReference type="PIR" id="T08418">
    <property type="entry name" value="T08418"/>
</dbReference>
<dbReference type="RefSeq" id="NP_001014464.1">
    <molecule id="P32023-1"/>
    <property type="nucleotide sequence ID" value="NM_001014464.2"/>
</dbReference>
<dbReference type="RefSeq" id="NP_001162858.1">
    <molecule id="P32023-2"/>
    <property type="nucleotide sequence ID" value="NM_001169387.2"/>
</dbReference>
<dbReference type="RefSeq" id="NP_477489.1">
    <molecule id="P32023-2"/>
    <property type="nucleotide sequence ID" value="NM_058141.4"/>
</dbReference>
<dbReference type="RefSeq" id="NP_477490.1">
    <molecule id="P32023-1"/>
    <property type="nucleotide sequence ID" value="NM_058142.4"/>
</dbReference>
<dbReference type="RefSeq" id="NP_599146.1">
    <molecule id="P32023-2"/>
    <property type="nucleotide sequence ID" value="NM_134319.4"/>
</dbReference>
<dbReference type="RefSeq" id="NP_995629.1">
    <molecule id="P32023-2"/>
    <property type="nucleotide sequence ID" value="NM_205907.2"/>
</dbReference>
<dbReference type="SMR" id="P32023"/>
<dbReference type="BioGRID" id="69303">
    <property type="interactions" value="13"/>
</dbReference>
<dbReference type="DNASU" id="44817"/>
<dbReference type="EnsemblMetazoa" id="FBtr0089306">
    <molecule id="P32023-1"/>
    <property type="protein sequence ID" value="FBpp0088352"/>
    <property type="gene ID" value="FBgn0000721"/>
</dbReference>
<dbReference type="EnsemblMetazoa" id="FBtr0089307">
    <molecule id="P32023-2"/>
    <property type="protein sequence ID" value="FBpp0088353"/>
    <property type="gene ID" value="FBgn0000721"/>
</dbReference>
<dbReference type="EnsemblMetazoa" id="FBtr0089308">
    <molecule id="P32023-2"/>
    <property type="protein sequence ID" value="FBpp0088354"/>
    <property type="gene ID" value="FBgn0000721"/>
</dbReference>
<dbReference type="EnsemblMetazoa" id="FBtr0089309">
    <molecule id="P32023-2"/>
    <property type="protein sequence ID" value="FBpp0088924"/>
    <property type="gene ID" value="FBgn0000721"/>
</dbReference>
<dbReference type="EnsemblMetazoa" id="FBtr0100363">
    <molecule id="P32023-1"/>
    <property type="protein sequence ID" value="FBpp0099769"/>
    <property type="gene ID" value="FBgn0000721"/>
</dbReference>
<dbReference type="EnsemblMetazoa" id="FBtr0301399">
    <molecule id="P32023-2"/>
    <property type="protein sequence ID" value="FBpp0290613"/>
    <property type="gene ID" value="FBgn0000721"/>
</dbReference>
<dbReference type="GeneID" id="44817"/>
<dbReference type="KEGG" id="dme:Dmel_CG10033"/>
<dbReference type="UCSC" id="CG10033-RA">
    <molecule id="P32023-1"/>
    <property type="organism name" value="d. melanogaster"/>
</dbReference>
<dbReference type="AGR" id="FB:FBgn0000721"/>
<dbReference type="CTD" id="44817"/>
<dbReference type="FlyBase" id="FBgn0000721">
    <property type="gene designation" value="for"/>
</dbReference>
<dbReference type="VEuPathDB" id="VectorBase:FBgn0000721"/>
<dbReference type="HOGENOM" id="CLU_013232_0_0_1"/>
<dbReference type="OrthoDB" id="63267at2759"/>
<dbReference type="BRENDA" id="2.7.11.12">
    <property type="organism ID" value="1994"/>
</dbReference>
<dbReference type="BioGRID-ORCS" id="44817">
    <property type="hits" value="0 hits in 3 CRISPR screens"/>
</dbReference>
<dbReference type="ChiTaRS" id="for">
    <property type="organism name" value="fly"/>
</dbReference>
<dbReference type="GenomeRNAi" id="44817"/>
<dbReference type="Proteomes" id="UP000000803">
    <property type="component" value="Chromosome 2L"/>
</dbReference>
<dbReference type="Bgee" id="FBgn0000721">
    <property type="expression patterns" value="Expressed in spermathecum and 220 other cell types or tissues"/>
</dbReference>
<dbReference type="ExpressionAtlas" id="P32023">
    <property type="expression patterns" value="baseline and differential"/>
</dbReference>
<dbReference type="GO" id="GO:0005737">
    <property type="term" value="C:cytoplasm"/>
    <property type="evidence" value="ECO:0000314"/>
    <property type="project" value="FlyBase"/>
</dbReference>
<dbReference type="GO" id="GO:0005829">
    <property type="term" value="C:cytosol"/>
    <property type="evidence" value="ECO:0007005"/>
    <property type="project" value="FlyBase"/>
</dbReference>
<dbReference type="GO" id="GO:0005886">
    <property type="term" value="C:plasma membrane"/>
    <property type="evidence" value="ECO:0000314"/>
    <property type="project" value="FlyBase"/>
</dbReference>
<dbReference type="GO" id="GO:0005524">
    <property type="term" value="F:ATP binding"/>
    <property type="evidence" value="ECO:0007669"/>
    <property type="project" value="UniProtKB-KW"/>
</dbReference>
<dbReference type="GO" id="GO:0030553">
    <property type="term" value="F:cGMP binding"/>
    <property type="evidence" value="ECO:0007669"/>
    <property type="project" value="UniProtKB-KW"/>
</dbReference>
<dbReference type="GO" id="GO:0004692">
    <property type="term" value="F:cGMP-dependent protein kinase activity"/>
    <property type="evidence" value="ECO:0000314"/>
    <property type="project" value="FlyBase"/>
</dbReference>
<dbReference type="GO" id="GO:0106310">
    <property type="term" value="F:protein serine kinase activity"/>
    <property type="evidence" value="ECO:0007669"/>
    <property type="project" value="RHEA"/>
</dbReference>
<dbReference type="GO" id="GO:0007631">
    <property type="term" value="P:feeding behavior"/>
    <property type="evidence" value="ECO:0000304"/>
    <property type="project" value="FlyBase"/>
</dbReference>
<dbReference type="GO" id="GO:0046959">
    <property type="term" value="P:habituation"/>
    <property type="evidence" value="ECO:0000315"/>
    <property type="project" value="FlyBase"/>
</dbReference>
<dbReference type="GO" id="GO:0030536">
    <property type="term" value="P:larval feeding behavior"/>
    <property type="evidence" value="ECO:0000315"/>
    <property type="project" value="UniProtKB"/>
</dbReference>
<dbReference type="GO" id="GO:0008345">
    <property type="term" value="P:larval locomotory behavior"/>
    <property type="evidence" value="ECO:0000315"/>
    <property type="project" value="FlyBase"/>
</dbReference>
<dbReference type="GO" id="GO:0007616">
    <property type="term" value="P:long-term memory"/>
    <property type="evidence" value="ECO:0000315"/>
    <property type="project" value="FlyBase"/>
</dbReference>
<dbReference type="GO" id="GO:0008045">
    <property type="term" value="P:motor neuron axon guidance"/>
    <property type="evidence" value="ECO:0000315"/>
    <property type="project" value="FlyBase"/>
</dbReference>
<dbReference type="GO" id="GO:0006468">
    <property type="term" value="P:protein phosphorylation"/>
    <property type="evidence" value="ECO:0000314"/>
    <property type="project" value="UniProtKB"/>
</dbReference>
<dbReference type="GO" id="GO:0007168">
    <property type="term" value="P:receptor guanylyl cyclase signaling pathway"/>
    <property type="evidence" value="ECO:0000318"/>
    <property type="project" value="GO_Central"/>
</dbReference>
<dbReference type="GO" id="GO:0008016">
    <property type="term" value="P:regulation of heart contraction"/>
    <property type="evidence" value="ECO:0000315"/>
    <property type="project" value="FlyBase"/>
</dbReference>
<dbReference type="GO" id="GO:0032095">
    <property type="term" value="P:regulation of response to food"/>
    <property type="evidence" value="ECO:0000315"/>
    <property type="project" value="FlyBase"/>
</dbReference>
<dbReference type="GO" id="GO:0009744">
    <property type="term" value="P:response to sucrose"/>
    <property type="evidence" value="ECO:0000314"/>
    <property type="project" value="FlyBase"/>
</dbReference>
<dbReference type="GO" id="GO:0007614">
    <property type="term" value="P:short-term memory"/>
    <property type="evidence" value="ECO:0000315"/>
    <property type="project" value="FlyBase"/>
</dbReference>
<dbReference type="CDD" id="cd00038">
    <property type="entry name" value="CAP_ED"/>
    <property type="match status" value="2"/>
</dbReference>
<dbReference type="CDD" id="cd05572">
    <property type="entry name" value="STKc_cGK"/>
    <property type="match status" value="1"/>
</dbReference>
<dbReference type="FunFam" id="1.10.510.10:FF:000096">
    <property type="entry name" value="cGMP-dependent protein kinase"/>
    <property type="match status" value="1"/>
</dbReference>
<dbReference type="FunFam" id="2.60.120.10:FF:000064">
    <property type="entry name" value="cGMP-dependent protein kinase, isozyme"/>
    <property type="match status" value="1"/>
</dbReference>
<dbReference type="Gene3D" id="2.60.120.10">
    <property type="entry name" value="Jelly Rolls"/>
    <property type="match status" value="2"/>
</dbReference>
<dbReference type="Gene3D" id="3.30.200.20">
    <property type="entry name" value="Phosphorylase Kinase, domain 1"/>
    <property type="match status" value="1"/>
</dbReference>
<dbReference type="Gene3D" id="1.10.510.10">
    <property type="entry name" value="Transferase(Phosphotransferase) domain 1"/>
    <property type="match status" value="1"/>
</dbReference>
<dbReference type="InterPro" id="IPR000961">
    <property type="entry name" value="AGC-kinase_C"/>
</dbReference>
<dbReference type="InterPro" id="IPR002374">
    <property type="entry name" value="cGMP_dep_kinase"/>
</dbReference>
<dbReference type="InterPro" id="IPR018488">
    <property type="entry name" value="cNMP-bd_CS"/>
</dbReference>
<dbReference type="InterPro" id="IPR000595">
    <property type="entry name" value="cNMP-bd_dom"/>
</dbReference>
<dbReference type="InterPro" id="IPR018490">
    <property type="entry name" value="cNMP-bd_dom_sf"/>
</dbReference>
<dbReference type="InterPro" id="IPR011009">
    <property type="entry name" value="Kinase-like_dom_sf"/>
</dbReference>
<dbReference type="InterPro" id="IPR000719">
    <property type="entry name" value="Prot_kinase_dom"/>
</dbReference>
<dbReference type="InterPro" id="IPR017441">
    <property type="entry name" value="Protein_kinase_ATP_BS"/>
</dbReference>
<dbReference type="InterPro" id="IPR014710">
    <property type="entry name" value="RmlC-like_jellyroll"/>
</dbReference>
<dbReference type="InterPro" id="IPR008271">
    <property type="entry name" value="Ser/Thr_kinase_AS"/>
</dbReference>
<dbReference type="InterPro" id="IPR035014">
    <property type="entry name" value="STKc_cGK"/>
</dbReference>
<dbReference type="PANTHER" id="PTHR24353:SF111">
    <property type="match status" value="1"/>
</dbReference>
<dbReference type="PANTHER" id="PTHR24353">
    <property type="entry name" value="CYCLIC NUCLEOTIDE-DEPENDENT PROTEIN KINASE"/>
    <property type="match status" value="1"/>
</dbReference>
<dbReference type="Pfam" id="PF00027">
    <property type="entry name" value="cNMP_binding"/>
    <property type="match status" value="2"/>
</dbReference>
<dbReference type="Pfam" id="PF00069">
    <property type="entry name" value="Pkinase"/>
    <property type="match status" value="1"/>
</dbReference>
<dbReference type="PRINTS" id="PR00104">
    <property type="entry name" value="CGMPKINASE"/>
</dbReference>
<dbReference type="SMART" id="SM00100">
    <property type="entry name" value="cNMP"/>
    <property type="match status" value="1"/>
</dbReference>
<dbReference type="SMART" id="SM00133">
    <property type="entry name" value="S_TK_X"/>
    <property type="match status" value="1"/>
</dbReference>
<dbReference type="SMART" id="SM00220">
    <property type="entry name" value="S_TKc"/>
    <property type="match status" value="1"/>
</dbReference>
<dbReference type="SUPFAM" id="SSF51206">
    <property type="entry name" value="cAMP-binding domain-like"/>
    <property type="match status" value="2"/>
</dbReference>
<dbReference type="SUPFAM" id="SSF56112">
    <property type="entry name" value="Protein kinase-like (PK-like)"/>
    <property type="match status" value="1"/>
</dbReference>
<dbReference type="PROSITE" id="PS51285">
    <property type="entry name" value="AGC_KINASE_CTER"/>
    <property type="match status" value="1"/>
</dbReference>
<dbReference type="PROSITE" id="PS00888">
    <property type="entry name" value="CNMP_BINDING_1"/>
    <property type="match status" value="1"/>
</dbReference>
<dbReference type="PROSITE" id="PS00889">
    <property type="entry name" value="CNMP_BINDING_2"/>
    <property type="match status" value="2"/>
</dbReference>
<dbReference type="PROSITE" id="PS50042">
    <property type="entry name" value="CNMP_BINDING_3"/>
    <property type="match status" value="2"/>
</dbReference>
<dbReference type="PROSITE" id="PS00107">
    <property type="entry name" value="PROTEIN_KINASE_ATP"/>
    <property type="match status" value="1"/>
</dbReference>
<dbReference type="PROSITE" id="PS50011">
    <property type="entry name" value="PROTEIN_KINASE_DOM"/>
    <property type="match status" value="1"/>
</dbReference>
<dbReference type="PROSITE" id="PS00108">
    <property type="entry name" value="PROTEIN_KINASE_ST"/>
    <property type="match status" value="1"/>
</dbReference>
<protein>
    <recommendedName>
        <fullName>cGMP-dependent protein kinase, isozyme 2 forms cD5/T2</fullName>
        <shortName>cGK</shortName>
        <ecNumber>2.7.11.12</ecNumber>
    </recommendedName>
    <alternativeName>
        <fullName>Foraging protein</fullName>
    </alternativeName>
</protein>
<keyword id="KW-0025">Alternative splicing</keyword>
<keyword id="KW-0067">ATP-binding</keyword>
<keyword id="KW-0140">cGMP</keyword>
<keyword id="KW-0142">cGMP-binding</keyword>
<keyword id="KW-0418">Kinase</keyword>
<keyword id="KW-0547">Nucleotide-binding</keyword>
<keyword id="KW-1185">Reference proteome</keyword>
<keyword id="KW-0723">Serine/threonine-protein kinase</keyword>
<keyword id="KW-0808">Transferase</keyword>
<sequence>MKIKHYPGKAVDASLSLEGSSAMGALYEANWLRAANQPAAPATTGTKLSRQSSSAGSSFLIEGISALSKYQMTLENIRQLELQSRDKRIASTIKELSGYRPSALQHHQQQQMHNVWVAEDQDQEHEELEDASEGKEKLASIQEPPAVNHYVLDPTERPRVPRPRQQFSVKPPSLRRSQTMSQPPSYATLRSPPKIKENLSKSSSAYSTFSSAAEDSQDQVVICQQPQRLMAPPPREPPPEPPKRVSKPLSRSQTSVQRYATVRMPNQTTSFSRSVVRSRDSTASQRRLSLEQAIEGLKLEGEKAVRQKSPQISPAASSNGSSKDLNGEGFCIPRPRLIVPVHTYARRRRTGNLKEQSSGGQEEEAEKGKGWKDFYVLSQDRHSSFYINRIGQNYDYDYPINFNIFSPDGRVEVSREGKYLSTLSGAKVLGELAILYNCQRTATITAITECNLWAIERQCFQTIMMRTGLIRQAEYSDFLKSVPIFKDLAEDTLIKISDVLEETHYQRGDYIVRQGARGDTFFIISKGKVRVTIKQQDTQEEKFIRMLGKGDFFGEKALQGDDLRTANIICESADGVSCLVIDRETFNQLISNLDEIKHRYDDEGAMERRKINEEFRDINLTDLRVIATLGVGGFGRVELVQTNGDSSRSFALKQMKKSQIVETRQQQHIMSEKEIMGEANCQFIVKLFKTFKDKKYLYMLMESCLGGELWTILRDKGNFDDSTTRFYTACVVEAFDYLHSRNIIYRDLKPENLLLNERGYVKLVDFGFAKKLQTGRKTWTFCGTPEYVAPEVILNRGHDISADYWSLGVLMFELLTGTPPFTGSDPMRTYNIILKGIDAIEFPRNITRNASNLIKKLCRDNPAERLGYQRGGISEIQKHKWFDGFYWWGLQNCTLEPPIKPAVKSVVDTTNFDDYPPDPEGPPPDDVTGWDKDF</sequence>
<organism>
    <name type="scientific">Drosophila melanogaster</name>
    <name type="common">Fruit fly</name>
    <dbReference type="NCBI Taxonomy" id="7227"/>
    <lineage>
        <taxon>Eukaryota</taxon>
        <taxon>Metazoa</taxon>
        <taxon>Ecdysozoa</taxon>
        <taxon>Arthropoda</taxon>
        <taxon>Hexapoda</taxon>
        <taxon>Insecta</taxon>
        <taxon>Pterygota</taxon>
        <taxon>Neoptera</taxon>
        <taxon>Endopterygota</taxon>
        <taxon>Diptera</taxon>
        <taxon>Brachycera</taxon>
        <taxon>Muscomorpha</taxon>
        <taxon>Ephydroidea</taxon>
        <taxon>Drosophilidae</taxon>
        <taxon>Drosophila</taxon>
        <taxon>Sophophora</taxon>
    </lineage>
</organism>
<accession>P32023</accession>
<accession>A4V044</accession>
<accession>A4V046</accession>
<accession>Q0E8U1</accession>
<accession>Q24302</accession>
<accession>Q24303</accession>
<accession>Q9I7Q0</accession>
<accession>Q9I7Q2</accession>
<reference key="1">
    <citation type="journal article" date="1989" name="J. Biol. Chem.">
        <title>cGMP-dependent protein kinase genes in Drosophila.</title>
        <authorList>
            <person name="Kalderon D."/>
            <person name="Rubin G.M."/>
        </authorList>
    </citation>
    <scope>NUCLEOTIDE SEQUENCE [GENOMIC DNA / MRNA] (ISOFORMS CD5 AND T2)</scope>
    <scope>DEVELOPMENTAL STAGE</scope>
    <source>
        <strain>Canton-S</strain>
        <tissue>Imaginal disk</tissue>
    </source>
</reference>
<reference key="2">
    <citation type="journal article" date="2000" name="Science">
        <title>The genome sequence of Drosophila melanogaster.</title>
        <authorList>
            <person name="Adams M.D."/>
            <person name="Celniker S.E."/>
            <person name="Holt R.A."/>
            <person name="Evans C.A."/>
            <person name="Gocayne J.D."/>
            <person name="Amanatides P.G."/>
            <person name="Scherer S.E."/>
            <person name="Li P.W."/>
            <person name="Hoskins R.A."/>
            <person name="Galle R.F."/>
            <person name="George R.A."/>
            <person name="Lewis S.E."/>
            <person name="Richards S."/>
            <person name="Ashburner M."/>
            <person name="Henderson S.N."/>
            <person name="Sutton G.G."/>
            <person name="Wortman J.R."/>
            <person name="Yandell M.D."/>
            <person name="Zhang Q."/>
            <person name="Chen L.X."/>
            <person name="Brandon R.C."/>
            <person name="Rogers Y.-H.C."/>
            <person name="Blazej R.G."/>
            <person name="Champe M."/>
            <person name="Pfeiffer B.D."/>
            <person name="Wan K.H."/>
            <person name="Doyle C."/>
            <person name="Baxter E.G."/>
            <person name="Helt G."/>
            <person name="Nelson C.R."/>
            <person name="Miklos G.L.G."/>
            <person name="Abril J.F."/>
            <person name="Agbayani A."/>
            <person name="An H.-J."/>
            <person name="Andrews-Pfannkoch C."/>
            <person name="Baldwin D."/>
            <person name="Ballew R.M."/>
            <person name="Basu A."/>
            <person name="Baxendale J."/>
            <person name="Bayraktaroglu L."/>
            <person name="Beasley E.M."/>
            <person name="Beeson K.Y."/>
            <person name="Benos P.V."/>
            <person name="Berman B.P."/>
            <person name="Bhandari D."/>
            <person name="Bolshakov S."/>
            <person name="Borkova D."/>
            <person name="Botchan M.R."/>
            <person name="Bouck J."/>
            <person name="Brokstein P."/>
            <person name="Brottier P."/>
            <person name="Burtis K.C."/>
            <person name="Busam D.A."/>
            <person name="Butler H."/>
            <person name="Cadieu E."/>
            <person name="Center A."/>
            <person name="Chandra I."/>
            <person name="Cherry J.M."/>
            <person name="Cawley S."/>
            <person name="Dahlke C."/>
            <person name="Davenport L.B."/>
            <person name="Davies P."/>
            <person name="de Pablos B."/>
            <person name="Delcher A."/>
            <person name="Deng Z."/>
            <person name="Mays A.D."/>
            <person name="Dew I."/>
            <person name="Dietz S.M."/>
            <person name="Dodson K."/>
            <person name="Doup L.E."/>
            <person name="Downes M."/>
            <person name="Dugan-Rocha S."/>
            <person name="Dunkov B.C."/>
            <person name="Dunn P."/>
            <person name="Durbin K.J."/>
            <person name="Evangelista C.C."/>
            <person name="Ferraz C."/>
            <person name="Ferriera S."/>
            <person name="Fleischmann W."/>
            <person name="Fosler C."/>
            <person name="Gabrielian A.E."/>
            <person name="Garg N.S."/>
            <person name="Gelbart W.M."/>
            <person name="Glasser K."/>
            <person name="Glodek A."/>
            <person name="Gong F."/>
            <person name="Gorrell J.H."/>
            <person name="Gu Z."/>
            <person name="Guan P."/>
            <person name="Harris M."/>
            <person name="Harris N.L."/>
            <person name="Harvey D.A."/>
            <person name="Heiman T.J."/>
            <person name="Hernandez J.R."/>
            <person name="Houck J."/>
            <person name="Hostin D."/>
            <person name="Houston K.A."/>
            <person name="Howland T.J."/>
            <person name="Wei M.-H."/>
            <person name="Ibegwam C."/>
            <person name="Jalali M."/>
            <person name="Kalush F."/>
            <person name="Karpen G.H."/>
            <person name="Ke Z."/>
            <person name="Kennison J.A."/>
            <person name="Ketchum K.A."/>
            <person name="Kimmel B.E."/>
            <person name="Kodira C.D."/>
            <person name="Kraft C.L."/>
            <person name="Kravitz S."/>
            <person name="Kulp D."/>
            <person name="Lai Z."/>
            <person name="Lasko P."/>
            <person name="Lei Y."/>
            <person name="Levitsky A.A."/>
            <person name="Li J.H."/>
            <person name="Li Z."/>
            <person name="Liang Y."/>
            <person name="Lin X."/>
            <person name="Liu X."/>
            <person name="Mattei B."/>
            <person name="McIntosh T.C."/>
            <person name="McLeod M.P."/>
            <person name="McPherson D."/>
            <person name="Merkulov G."/>
            <person name="Milshina N.V."/>
            <person name="Mobarry C."/>
            <person name="Morris J."/>
            <person name="Moshrefi A."/>
            <person name="Mount S.M."/>
            <person name="Moy M."/>
            <person name="Murphy B."/>
            <person name="Murphy L."/>
            <person name="Muzny D.M."/>
            <person name="Nelson D.L."/>
            <person name="Nelson D.R."/>
            <person name="Nelson K.A."/>
            <person name="Nixon K."/>
            <person name="Nusskern D.R."/>
            <person name="Pacleb J.M."/>
            <person name="Palazzolo M."/>
            <person name="Pittman G.S."/>
            <person name="Pan S."/>
            <person name="Pollard J."/>
            <person name="Puri V."/>
            <person name="Reese M.G."/>
            <person name="Reinert K."/>
            <person name="Remington K."/>
            <person name="Saunders R.D.C."/>
            <person name="Scheeler F."/>
            <person name="Shen H."/>
            <person name="Shue B.C."/>
            <person name="Siden-Kiamos I."/>
            <person name="Simpson M."/>
            <person name="Skupski M.P."/>
            <person name="Smith T.J."/>
            <person name="Spier E."/>
            <person name="Spradling A.C."/>
            <person name="Stapleton M."/>
            <person name="Strong R."/>
            <person name="Sun E."/>
            <person name="Svirskas R."/>
            <person name="Tector C."/>
            <person name="Turner R."/>
            <person name="Venter E."/>
            <person name="Wang A.H."/>
            <person name="Wang X."/>
            <person name="Wang Z.-Y."/>
            <person name="Wassarman D.A."/>
            <person name="Weinstock G.M."/>
            <person name="Weissenbach J."/>
            <person name="Williams S.M."/>
            <person name="Woodage T."/>
            <person name="Worley K.C."/>
            <person name="Wu D."/>
            <person name="Yang S."/>
            <person name="Yao Q.A."/>
            <person name="Ye J."/>
            <person name="Yeh R.-F."/>
            <person name="Zaveri J.S."/>
            <person name="Zhan M."/>
            <person name="Zhang G."/>
            <person name="Zhao Q."/>
            <person name="Zheng L."/>
            <person name="Zheng X.H."/>
            <person name="Zhong F.N."/>
            <person name="Zhong W."/>
            <person name="Zhou X."/>
            <person name="Zhu S.C."/>
            <person name="Zhu X."/>
            <person name="Smith H.O."/>
            <person name="Gibbs R.A."/>
            <person name="Myers E.W."/>
            <person name="Rubin G.M."/>
            <person name="Venter J.C."/>
        </authorList>
    </citation>
    <scope>NUCLEOTIDE SEQUENCE [LARGE SCALE GENOMIC DNA]</scope>
    <source>
        <strain>Berkeley</strain>
    </source>
</reference>
<reference key="3">
    <citation type="journal article" date="2002" name="Genome Biol.">
        <title>Annotation of the Drosophila melanogaster euchromatic genome: a systematic review.</title>
        <authorList>
            <person name="Misra S."/>
            <person name="Crosby M.A."/>
            <person name="Mungall C.J."/>
            <person name="Matthews B.B."/>
            <person name="Campbell K.S."/>
            <person name="Hradecky P."/>
            <person name="Huang Y."/>
            <person name="Kaminker J.S."/>
            <person name="Millburn G.H."/>
            <person name="Prochnik S.E."/>
            <person name="Smith C.D."/>
            <person name="Tupy J.L."/>
            <person name="Whitfield E.J."/>
            <person name="Bayraktaroglu L."/>
            <person name="Berman B.P."/>
            <person name="Bettencourt B.R."/>
            <person name="Celniker S.E."/>
            <person name="de Grey A.D.N.J."/>
            <person name="Drysdale R.A."/>
            <person name="Harris N.L."/>
            <person name="Richter J."/>
            <person name="Russo S."/>
            <person name="Schroeder A.J."/>
            <person name="Shu S.Q."/>
            <person name="Stapleton M."/>
            <person name="Yamada C."/>
            <person name="Ashburner M."/>
            <person name="Gelbart W.M."/>
            <person name="Rubin G.M."/>
            <person name="Lewis S.E."/>
        </authorList>
    </citation>
    <scope>GENOME REANNOTATION</scope>
    <source>
        <strain>Berkeley</strain>
    </source>
</reference>
<reference key="4">
    <citation type="submission" date="2003-12" db="EMBL/GenBank/DDBJ databases">
        <authorList>
            <person name="Stapleton M."/>
            <person name="Brokstein P."/>
            <person name="Hong L."/>
            <person name="Agbayani A."/>
            <person name="Carlson J.W."/>
            <person name="Champe M."/>
            <person name="Chavez C."/>
            <person name="Dorsett V."/>
            <person name="Dresnek D."/>
            <person name="Farfan D."/>
            <person name="Frise E."/>
            <person name="George R.A."/>
            <person name="Gonzalez M."/>
            <person name="Guarin H."/>
            <person name="Kronmiller B."/>
            <person name="Li P.W."/>
            <person name="Liao G."/>
            <person name="Miranda A."/>
            <person name="Mungall C.J."/>
            <person name="Nunoo J."/>
            <person name="Pacleb J.M."/>
            <person name="Paragas V."/>
            <person name="Park S."/>
            <person name="Patel S."/>
            <person name="Phouanenavong S."/>
            <person name="Wan K.H."/>
            <person name="Yu C."/>
            <person name="Lewis S.E."/>
            <person name="Rubin G.M."/>
            <person name="Celniker S.E."/>
        </authorList>
    </citation>
    <scope>NUCLEOTIDE SEQUENCE [LARGE SCALE MRNA] (ISOFORM T2)</scope>
    <source>
        <strain>Berkeley</strain>
        <tissue>Embryo</tissue>
        <tissue>Head</tissue>
    </source>
</reference>
<comment type="catalytic activity">
    <reaction>
        <text>L-seryl-[protein] + ATP = O-phospho-L-seryl-[protein] + ADP + H(+)</text>
        <dbReference type="Rhea" id="RHEA:17989"/>
        <dbReference type="Rhea" id="RHEA-COMP:9863"/>
        <dbReference type="Rhea" id="RHEA-COMP:11604"/>
        <dbReference type="ChEBI" id="CHEBI:15378"/>
        <dbReference type="ChEBI" id="CHEBI:29999"/>
        <dbReference type="ChEBI" id="CHEBI:30616"/>
        <dbReference type="ChEBI" id="CHEBI:83421"/>
        <dbReference type="ChEBI" id="CHEBI:456216"/>
        <dbReference type="EC" id="2.7.11.12"/>
    </reaction>
</comment>
<comment type="catalytic activity">
    <reaction>
        <text>L-threonyl-[protein] + ATP = O-phospho-L-threonyl-[protein] + ADP + H(+)</text>
        <dbReference type="Rhea" id="RHEA:46608"/>
        <dbReference type="Rhea" id="RHEA-COMP:11060"/>
        <dbReference type="Rhea" id="RHEA-COMP:11605"/>
        <dbReference type="ChEBI" id="CHEBI:15378"/>
        <dbReference type="ChEBI" id="CHEBI:30013"/>
        <dbReference type="ChEBI" id="CHEBI:30616"/>
        <dbReference type="ChEBI" id="CHEBI:61977"/>
        <dbReference type="ChEBI" id="CHEBI:456216"/>
        <dbReference type="EC" id="2.7.11.12"/>
    </reaction>
</comment>
<comment type="alternative products">
    <event type="alternative splicing"/>
    <isoform>
        <id>P32023-1</id>
        <name>cD5</name>
        <name>E</name>
        <name>J</name>
        <sequence type="displayed"/>
    </isoform>
    <isoform>
        <id>P32023-2</id>
        <name>T2</name>
        <name>C</name>
        <name>D</name>
        <name>G</name>
        <name>T2a</name>
        <name>T2b</name>
        <sequence type="described" ref="VSP_004764"/>
    </isoform>
    <isoform>
        <id>Q03043-4</id>
        <name>cD4</name>
        <sequence type="external"/>
    </isoform>
    <isoform>
        <id>Q03043-1</id>
        <name>T1</name>
        <name>A</name>
        <name>H</name>
        <sequence type="external"/>
    </isoform>
    <isoform>
        <id>Q03043-2</id>
        <name>T3A</name>
        <sequence type="external"/>
    </isoform>
    <isoform>
        <id>Q03043-3</id>
        <name>T3B</name>
        <name>B</name>
        <sequence type="external"/>
    </isoform>
</comment>
<comment type="developmental stage">
    <text evidence="6">Expressed throughout development, high during embryonic and adult stages. Isoform T2 is predominantly expressed during larval and adult stages.</text>
</comment>
<comment type="similarity">
    <text evidence="9">Belongs to the protein kinase superfamily. AGC Ser/Thr protein kinase family. cGMP subfamily.</text>
</comment>
<evidence type="ECO:0000250" key="1">
    <source>
        <dbReference type="UniProtKB" id="Q13976"/>
    </source>
</evidence>
<evidence type="ECO:0000255" key="2">
    <source>
        <dbReference type="PROSITE-ProRule" id="PRU00159"/>
    </source>
</evidence>
<evidence type="ECO:0000255" key="3">
    <source>
        <dbReference type="PROSITE-ProRule" id="PRU00618"/>
    </source>
</evidence>
<evidence type="ECO:0000255" key="4">
    <source>
        <dbReference type="PROSITE-ProRule" id="PRU10027"/>
    </source>
</evidence>
<evidence type="ECO:0000256" key="5">
    <source>
        <dbReference type="SAM" id="MobiDB-lite"/>
    </source>
</evidence>
<evidence type="ECO:0000269" key="6">
    <source>
    </source>
</evidence>
<evidence type="ECO:0000303" key="7">
    <source>
    </source>
</evidence>
<evidence type="ECO:0000303" key="8">
    <source ref="4"/>
</evidence>
<evidence type="ECO:0000305" key="9"/>
<proteinExistence type="evidence at transcript level"/>
<gene>
    <name type="primary">for</name>
    <name type="synonym">DG2</name>
    <name type="synonym">PGK2</name>
    <name type="synonym">Pkg24A</name>
    <name type="ORF">CG10033</name>
</gene>
<name>KGP25_DROME</name>
<feature type="chain" id="PRO_0000086122" description="cGMP-dependent protein kinase, isozyme 2 forms cD5/T2">
    <location>
        <begin position="1"/>
        <end position="934"/>
    </location>
</feature>
<feature type="domain" description="Protein kinase" evidence="2">
    <location>
        <begin position="623"/>
        <end position="882"/>
    </location>
</feature>
<feature type="domain" description="AGC-kinase C-terminal" evidence="3">
    <location>
        <begin position="883"/>
        <end position="934"/>
    </location>
</feature>
<feature type="region of interest" description="Disordered" evidence="5">
    <location>
        <begin position="121"/>
        <end position="287"/>
    </location>
</feature>
<feature type="region of interest" description="Disordered" evidence="5">
    <location>
        <begin position="301"/>
        <end position="327"/>
    </location>
</feature>
<feature type="region of interest" description="Disordered" evidence="5">
    <location>
        <begin position="910"/>
        <end position="934"/>
    </location>
</feature>
<feature type="compositionally biased region" description="Acidic residues" evidence="5">
    <location>
        <begin position="121"/>
        <end position="131"/>
    </location>
</feature>
<feature type="compositionally biased region" description="Polar residues" evidence="5">
    <location>
        <begin position="175"/>
        <end position="185"/>
    </location>
</feature>
<feature type="compositionally biased region" description="Low complexity" evidence="5">
    <location>
        <begin position="200"/>
        <end position="213"/>
    </location>
</feature>
<feature type="compositionally biased region" description="Polar residues" evidence="5">
    <location>
        <begin position="218"/>
        <end position="227"/>
    </location>
</feature>
<feature type="compositionally biased region" description="Polar residues" evidence="5">
    <location>
        <begin position="249"/>
        <end position="258"/>
    </location>
</feature>
<feature type="compositionally biased region" description="Polar residues" evidence="5">
    <location>
        <begin position="308"/>
        <end position="324"/>
    </location>
</feature>
<feature type="active site" description="Proton acceptor" evidence="2 4">
    <location>
        <position position="747"/>
    </location>
</feature>
<feature type="binding site" evidence="1">
    <location>
        <begin position="430"/>
        <end position="433"/>
    </location>
    <ligand>
        <name>3',5'-cyclic GMP</name>
        <dbReference type="ChEBI" id="CHEBI:57746"/>
        <label>1</label>
    </ligand>
</feature>
<feature type="binding site" evidence="1">
    <location>
        <begin position="440"/>
        <end position="441"/>
    </location>
    <ligand>
        <name>3',5'-cyclic GMP</name>
        <dbReference type="ChEBI" id="CHEBI:57746"/>
        <label>1</label>
    </ligand>
</feature>
<feature type="binding site" evidence="1">
    <location>
        <position position="545"/>
    </location>
    <ligand>
        <name>3',5'-cyclic GMP</name>
        <dbReference type="ChEBI" id="CHEBI:57746"/>
        <label>2</label>
    </ligand>
</feature>
<feature type="binding site" evidence="1">
    <location>
        <begin position="554"/>
        <end position="557"/>
    </location>
    <ligand>
        <name>3',5'-cyclic GMP</name>
        <dbReference type="ChEBI" id="CHEBI:57746"/>
        <label>2</label>
    </ligand>
</feature>
<feature type="binding site" evidence="1">
    <location>
        <begin position="564"/>
        <end position="565"/>
    </location>
    <ligand>
        <name>3',5'-cyclic GMP</name>
        <dbReference type="ChEBI" id="CHEBI:57746"/>
        <label>2</label>
    </ligand>
</feature>
<feature type="binding site" evidence="2">
    <location>
        <begin position="629"/>
        <end position="637"/>
    </location>
    <ligand>
        <name>ATP</name>
        <dbReference type="ChEBI" id="CHEBI:30616"/>
    </ligand>
</feature>
<feature type="binding site" evidence="2">
    <location>
        <position position="653"/>
    </location>
    <ligand>
        <name>ATP</name>
        <dbReference type="ChEBI" id="CHEBI:30616"/>
    </ligand>
</feature>
<feature type="splice variant" id="VSP_004764" description="In isoform T2." evidence="7 8">
    <location>
        <begin position="368"/>
        <end position="407"/>
    </location>
</feature>
<feature type="sequence conflict" description="In Ref. 1; AAA28454." evidence="9" ref="1">
    <original>A</original>
    <variation>V</variation>
    <location>
        <position position="66"/>
    </location>
</feature>
<feature type="sequence conflict" description="In Ref. 1; AAA28456/AAA28457/AAA28458." evidence="9" ref="1">
    <original>Q</original>
    <variation>H</variation>
    <location>
        <position position="219"/>
    </location>
</feature>
<feature type="sequence conflict" description="In Ref. 1; AAA28454." evidence="9" ref="1">
    <original>N</original>
    <variation>H</variation>
    <location>
        <position position="393"/>
    </location>
</feature>
<feature type="sequence conflict" description="In Ref. 1; AAA28454." evidence="9" ref="1">
    <original>N</original>
    <variation>D</variation>
    <location>
        <position position="401"/>
    </location>
</feature>
<feature type="sequence conflict" description="In Ref. 1; AAA28454." evidence="9" ref="1">
    <original>IFS</original>
    <variation>NFF</variation>
    <location>
        <begin position="404"/>
        <end position="406"/>
    </location>
</feature>
<feature type="sequence conflict" description="In Ref. 1; AAA28454." evidence="9" ref="1">
    <original>M</original>
    <variation>L</variation>
    <location>
        <position position="464"/>
    </location>
</feature>
<feature type="sequence conflict" description="In Ref. 1; AAA28456/AAA28458." evidence="9" ref="1">
    <original>Y</original>
    <variation>H</variation>
    <location>
        <position position="510"/>
    </location>
</feature>
<feature type="sequence conflict" description="In Ref. 1; AAA28454/AAA28456/AAA28457/AAA28458." evidence="9" ref="1">
    <original>V</original>
    <variation>G</variation>
    <location>
        <position position="761"/>
    </location>
</feature>